<feature type="chain" id="PRO_0000083804" description="3-isopropylmalate dehydrogenase">
    <location>
        <begin position="1"/>
        <end position="335"/>
    </location>
</feature>
<feature type="binding site" evidence="1">
    <location>
        <position position="87"/>
    </location>
    <ligand>
        <name>substrate</name>
    </ligand>
</feature>
<feature type="binding site" evidence="1">
    <location>
        <position position="97"/>
    </location>
    <ligand>
        <name>substrate</name>
    </ligand>
</feature>
<feature type="binding site" evidence="1">
    <location>
        <position position="121"/>
    </location>
    <ligand>
        <name>substrate</name>
    </ligand>
</feature>
<feature type="binding site" evidence="1">
    <location>
        <position position="211"/>
    </location>
    <ligand>
        <name>Mg(2+)</name>
        <dbReference type="ChEBI" id="CHEBI:18420"/>
    </ligand>
</feature>
<feature type="binding site" evidence="1">
    <location>
        <position position="211"/>
    </location>
    <ligand>
        <name>substrate</name>
    </ligand>
</feature>
<feature type="binding site" evidence="1">
    <location>
        <position position="235"/>
    </location>
    <ligand>
        <name>Mg(2+)</name>
        <dbReference type="ChEBI" id="CHEBI:18420"/>
    </ligand>
</feature>
<feature type="binding site" evidence="1">
    <location>
        <position position="239"/>
    </location>
    <ligand>
        <name>Mg(2+)</name>
        <dbReference type="ChEBI" id="CHEBI:18420"/>
    </ligand>
</feature>
<feature type="binding site" evidence="1">
    <location>
        <begin position="271"/>
        <end position="283"/>
    </location>
    <ligand>
        <name>NAD(+)</name>
        <dbReference type="ChEBI" id="CHEBI:57540"/>
    </ligand>
</feature>
<feature type="site" description="Important for catalysis" evidence="1">
    <location>
        <position position="128"/>
    </location>
</feature>
<feature type="site" description="Important for catalysis" evidence="1">
    <location>
        <position position="178"/>
    </location>
</feature>
<reference key="1">
    <citation type="journal article" date="2004" name="Proc. Natl. Acad. Sci. U.S.A.">
        <title>The complete genomic sequence of Nocardia farcinica IFM 10152.</title>
        <authorList>
            <person name="Ishikawa J."/>
            <person name="Yamashita A."/>
            <person name="Mikami Y."/>
            <person name="Hoshino Y."/>
            <person name="Kurita H."/>
            <person name="Hotta K."/>
            <person name="Shiba T."/>
            <person name="Hattori M."/>
        </authorList>
    </citation>
    <scope>NUCLEOTIDE SEQUENCE [LARGE SCALE GENOMIC DNA]</scope>
    <source>
        <strain>IFM 10152</strain>
    </source>
</reference>
<accession>Q5YRX2</accession>
<evidence type="ECO:0000255" key="1">
    <source>
        <dbReference type="HAMAP-Rule" id="MF_01035"/>
    </source>
</evidence>
<sequence length="335" mass="35247">MKLAVIPGDGIGPEVIAEALKVLDVVVPGVEKTEYDLGAKRYHATGEILPDSVLPELREHDAILLGAIGDPSVPSGVLERGLLLRTRFELDHHVNLRPSRLFTGVRSPLAGAPDIDFVVVREGTEGPYTGTGGAIRVRTPHEVATEVSTNTRFGIERVVRYAFAKAQARRKHLTLVHKTNVLTFAGSLWQRTVDEVGAEFPEVTVAYQHIDAATIHMVTDPGRFDVIVTDNLFGDIITDLAAAVSGGIGLAASGNIDASGTNPSMFEPVHGSAPDIAGQSKADPTAAILSVSLLLNHLGDTEAAARIDAAVAKDLAARSGTASTVEIGDRIAAAV</sequence>
<organism>
    <name type="scientific">Nocardia farcinica (strain IFM 10152)</name>
    <dbReference type="NCBI Taxonomy" id="247156"/>
    <lineage>
        <taxon>Bacteria</taxon>
        <taxon>Bacillati</taxon>
        <taxon>Actinomycetota</taxon>
        <taxon>Actinomycetes</taxon>
        <taxon>Mycobacteriales</taxon>
        <taxon>Nocardiaceae</taxon>
        <taxon>Nocardia</taxon>
    </lineage>
</organism>
<proteinExistence type="inferred from homology"/>
<comment type="function">
    <text evidence="1">Catalyzes the oxidation of 3-carboxy-2-hydroxy-4-methylpentanoate (3-isopropylmalate) to 3-carboxy-4-methyl-2-oxopentanoate. The product decarboxylates to 4-methyl-2 oxopentanoate.</text>
</comment>
<comment type="catalytic activity">
    <reaction evidence="1">
        <text>(2R,3S)-3-isopropylmalate + NAD(+) = 4-methyl-2-oxopentanoate + CO2 + NADH</text>
        <dbReference type="Rhea" id="RHEA:32271"/>
        <dbReference type="ChEBI" id="CHEBI:16526"/>
        <dbReference type="ChEBI" id="CHEBI:17865"/>
        <dbReference type="ChEBI" id="CHEBI:35121"/>
        <dbReference type="ChEBI" id="CHEBI:57540"/>
        <dbReference type="ChEBI" id="CHEBI:57945"/>
        <dbReference type="EC" id="1.1.1.85"/>
    </reaction>
</comment>
<comment type="cofactor">
    <cofactor evidence="1">
        <name>Mg(2+)</name>
        <dbReference type="ChEBI" id="CHEBI:18420"/>
    </cofactor>
    <cofactor evidence="1">
        <name>Mn(2+)</name>
        <dbReference type="ChEBI" id="CHEBI:29035"/>
    </cofactor>
    <text evidence="1">Binds 1 Mg(2+) or Mn(2+) ion per subunit.</text>
</comment>
<comment type="pathway">
    <text evidence="1">Amino-acid biosynthesis; L-leucine biosynthesis; L-leucine from 3-methyl-2-oxobutanoate: step 3/4.</text>
</comment>
<comment type="subunit">
    <text evidence="1">Homodimer.</text>
</comment>
<comment type="subcellular location">
    <subcellularLocation>
        <location evidence="1">Cytoplasm</location>
    </subcellularLocation>
</comment>
<comment type="similarity">
    <text evidence="1">Belongs to the isocitrate and isopropylmalate dehydrogenases family. LeuB type 2 subfamily.</text>
</comment>
<protein>
    <recommendedName>
        <fullName evidence="1">3-isopropylmalate dehydrogenase</fullName>
        <ecNumber evidence="1">1.1.1.85</ecNumber>
    </recommendedName>
    <alternativeName>
        <fullName evidence="1">3-IPM-DH</fullName>
    </alternativeName>
    <alternativeName>
        <fullName evidence="1">Beta-IPM dehydrogenase</fullName>
        <shortName evidence="1">IMDH</shortName>
    </alternativeName>
</protein>
<gene>
    <name evidence="1" type="primary">leuB</name>
    <name type="ordered locus">NFA_42200</name>
</gene>
<keyword id="KW-0028">Amino-acid biosynthesis</keyword>
<keyword id="KW-0100">Branched-chain amino acid biosynthesis</keyword>
<keyword id="KW-0963">Cytoplasm</keyword>
<keyword id="KW-0432">Leucine biosynthesis</keyword>
<keyword id="KW-0460">Magnesium</keyword>
<keyword id="KW-0464">Manganese</keyword>
<keyword id="KW-0479">Metal-binding</keyword>
<keyword id="KW-0520">NAD</keyword>
<keyword id="KW-0560">Oxidoreductase</keyword>
<keyword id="KW-1185">Reference proteome</keyword>
<dbReference type="EC" id="1.1.1.85" evidence="1"/>
<dbReference type="EMBL" id="AP006618">
    <property type="protein sequence ID" value="BAD59069.1"/>
    <property type="molecule type" value="Genomic_DNA"/>
</dbReference>
<dbReference type="RefSeq" id="WP_011210754.1">
    <property type="nucleotide sequence ID" value="NC_006361.1"/>
</dbReference>
<dbReference type="SMR" id="Q5YRX2"/>
<dbReference type="STRING" id="247156.NFA_42200"/>
<dbReference type="GeneID" id="61134856"/>
<dbReference type="KEGG" id="nfa:NFA_42200"/>
<dbReference type="eggNOG" id="COG0473">
    <property type="taxonomic scope" value="Bacteria"/>
</dbReference>
<dbReference type="HOGENOM" id="CLU_031953_0_1_11"/>
<dbReference type="OrthoDB" id="5289857at2"/>
<dbReference type="UniPathway" id="UPA00048">
    <property type="reaction ID" value="UER00072"/>
</dbReference>
<dbReference type="Proteomes" id="UP000006820">
    <property type="component" value="Chromosome"/>
</dbReference>
<dbReference type="GO" id="GO:0005737">
    <property type="term" value="C:cytoplasm"/>
    <property type="evidence" value="ECO:0007669"/>
    <property type="project" value="UniProtKB-SubCell"/>
</dbReference>
<dbReference type="GO" id="GO:0003862">
    <property type="term" value="F:3-isopropylmalate dehydrogenase activity"/>
    <property type="evidence" value="ECO:0007669"/>
    <property type="project" value="UniProtKB-UniRule"/>
</dbReference>
<dbReference type="GO" id="GO:0000287">
    <property type="term" value="F:magnesium ion binding"/>
    <property type="evidence" value="ECO:0007669"/>
    <property type="project" value="InterPro"/>
</dbReference>
<dbReference type="GO" id="GO:0051287">
    <property type="term" value="F:NAD binding"/>
    <property type="evidence" value="ECO:0007669"/>
    <property type="project" value="InterPro"/>
</dbReference>
<dbReference type="GO" id="GO:0009098">
    <property type="term" value="P:L-leucine biosynthetic process"/>
    <property type="evidence" value="ECO:0007669"/>
    <property type="project" value="UniProtKB-UniRule"/>
</dbReference>
<dbReference type="Gene3D" id="3.40.718.10">
    <property type="entry name" value="Isopropylmalate Dehydrogenase"/>
    <property type="match status" value="1"/>
</dbReference>
<dbReference type="HAMAP" id="MF_01035">
    <property type="entry name" value="LeuB_type2"/>
    <property type="match status" value="1"/>
</dbReference>
<dbReference type="InterPro" id="IPR050501">
    <property type="entry name" value="ICDH/IPMDH"/>
</dbReference>
<dbReference type="InterPro" id="IPR019818">
    <property type="entry name" value="IsoCit/isopropylmalate_DH_CS"/>
</dbReference>
<dbReference type="InterPro" id="IPR024084">
    <property type="entry name" value="IsoPropMal-DH-like_dom"/>
</dbReference>
<dbReference type="InterPro" id="IPR023698">
    <property type="entry name" value="LeuB_actb"/>
</dbReference>
<dbReference type="NCBIfam" id="NF002898">
    <property type="entry name" value="PRK03437.1"/>
    <property type="match status" value="1"/>
</dbReference>
<dbReference type="PANTHER" id="PTHR43275">
    <property type="entry name" value="D-MALATE DEHYDROGENASE [DECARBOXYLATING]"/>
    <property type="match status" value="1"/>
</dbReference>
<dbReference type="PANTHER" id="PTHR43275:SF1">
    <property type="entry name" value="D-MALATE DEHYDROGENASE [DECARBOXYLATING]"/>
    <property type="match status" value="1"/>
</dbReference>
<dbReference type="Pfam" id="PF00180">
    <property type="entry name" value="Iso_dh"/>
    <property type="match status" value="1"/>
</dbReference>
<dbReference type="SMART" id="SM01329">
    <property type="entry name" value="Iso_dh"/>
    <property type="match status" value="1"/>
</dbReference>
<dbReference type="SUPFAM" id="SSF53659">
    <property type="entry name" value="Isocitrate/Isopropylmalate dehydrogenase-like"/>
    <property type="match status" value="1"/>
</dbReference>
<dbReference type="PROSITE" id="PS00470">
    <property type="entry name" value="IDH_IMDH"/>
    <property type="match status" value="1"/>
</dbReference>
<name>LEU3_NOCFA</name>